<feature type="chain" id="PRO_0000322832" description="Holliday junction branch migration complex subunit RuvB">
    <location>
        <begin position="1"/>
        <end position="331"/>
    </location>
</feature>
<feature type="region of interest" description="Large ATPase domain (RuvB-L)" evidence="1">
    <location>
        <begin position="1"/>
        <end position="186"/>
    </location>
</feature>
<feature type="region of interest" description="Small ATPAse domain (RuvB-S)" evidence="1">
    <location>
        <begin position="187"/>
        <end position="257"/>
    </location>
</feature>
<feature type="region of interest" description="Head domain (RuvB-H)" evidence="1">
    <location>
        <begin position="260"/>
        <end position="331"/>
    </location>
</feature>
<feature type="binding site" evidence="1">
    <location>
        <position position="25"/>
    </location>
    <ligand>
        <name>ATP</name>
        <dbReference type="ChEBI" id="CHEBI:30616"/>
    </ligand>
</feature>
<feature type="binding site" evidence="1">
    <location>
        <position position="26"/>
    </location>
    <ligand>
        <name>ATP</name>
        <dbReference type="ChEBI" id="CHEBI:30616"/>
    </ligand>
</feature>
<feature type="binding site" evidence="1">
    <location>
        <position position="67"/>
    </location>
    <ligand>
        <name>ATP</name>
        <dbReference type="ChEBI" id="CHEBI:30616"/>
    </ligand>
</feature>
<feature type="binding site" evidence="1">
    <location>
        <position position="70"/>
    </location>
    <ligand>
        <name>ATP</name>
        <dbReference type="ChEBI" id="CHEBI:30616"/>
    </ligand>
</feature>
<feature type="binding site" evidence="1">
    <location>
        <position position="71"/>
    </location>
    <ligand>
        <name>ATP</name>
        <dbReference type="ChEBI" id="CHEBI:30616"/>
    </ligand>
</feature>
<feature type="binding site" evidence="1">
    <location>
        <position position="71"/>
    </location>
    <ligand>
        <name>Mg(2+)</name>
        <dbReference type="ChEBI" id="CHEBI:18420"/>
    </ligand>
</feature>
<feature type="binding site" evidence="1">
    <location>
        <position position="72"/>
    </location>
    <ligand>
        <name>ATP</name>
        <dbReference type="ChEBI" id="CHEBI:30616"/>
    </ligand>
</feature>
<feature type="binding site" evidence="1">
    <location>
        <begin position="133"/>
        <end position="135"/>
    </location>
    <ligand>
        <name>ATP</name>
        <dbReference type="ChEBI" id="CHEBI:30616"/>
    </ligand>
</feature>
<feature type="binding site" evidence="1">
    <location>
        <position position="176"/>
    </location>
    <ligand>
        <name>ATP</name>
        <dbReference type="ChEBI" id="CHEBI:30616"/>
    </ligand>
</feature>
<feature type="binding site" evidence="1">
    <location>
        <position position="186"/>
    </location>
    <ligand>
        <name>ATP</name>
        <dbReference type="ChEBI" id="CHEBI:30616"/>
    </ligand>
</feature>
<feature type="binding site" evidence="1">
    <location>
        <position position="223"/>
    </location>
    <ligand>
        <name>ATP</name>
        <dbReference type="ChEBI" id="CHEBI:30616"/>
    </ligand>
</feature>
<feature type="binding site" evidence="1">
    <location>
        <position position="296"/>
    </location>
    <ligand>
        <name>DNA</name>
        <dbReference type="ChEBI" id="CHEBI:16991"/>
    </ligand>
</feature>
<feature type="binding site" evidence="1">
    <location>
        <position position="315"/>
    </location>
    <ligand>
        <name>DNA</name>
        <dbReference type="ChEBI" id="CHEBI:16991"/>
    </ligand>
</feature>
<feature type="binding site" evidence="1">
    <location>
        <position position="320"/>
    </location>
    <ligand>
        <name>DNA</name>
        <dbReference type="ChEBI" id="CHEBI:16991"/>
    </ligand>
</feature>
<reference key="1">
    <citation type="submission" date="2006-03" db="EMBL/GenBank/DDBJ databases">
        <title>Complete sequence of chromosome of Psychrobacter cryohalolentis K5.</title>
        <authorList>
            <consortium name="US DOE Joint Genome Institute"/>
            <person name="Copeland A."/>
            <person name="Lucas S."/>
            <person name="Lapidus A."/>
            <person name="Barry K."/>
            <person name="Detter J.C."/>
            <person name="Glavina T."/>
            <person name="Hammon N."/>
            <person name="Israni S."/>
            <person name="Dalin E."/>
            <person name="Tice H."/>
            <person name="Pitluck S."/>
            <person name="Brettin T."/>
            <person name="Bruce D."/>
            <person name="Han C."/>
            <person name="Tapia R."/>
            <person name="Sims D.R."/>
            <person name="Gilna P."/>
            <person name="Schmutz J."/>
            <person name="Larimer F."/>
            <person name="Land M."/>
            <person name="Hauser L."/>
            <person name="Kyrpides N."/>
            <person name="Kim E."/>
            <person name="Richardson P."/>
        </authorList>
    </citation>
    <scope>NUCLEOTIDE SEQUENCE [LARGE SCALE GENOMIC DNA]</scope>
    <source>
        <strain>ATCC BAA-1226 / DSM 17306 / VKM B-2378 / K5</strain>
    </source>
</reference>
<comment type="function">
    <text evidence="1">The RuvA-RuvB-RuvC complex processes Holliday junction (HJ) DNA during genetic recombination and DNA repair, while the RuvA-RuvB complex plays an important role in the rescue of blocked DNA replication forks via replication fork reversal (RFR). RuvA specifically binds to HJ cruciform DNA, conferring on it an open structure. The RuvB hexamer acts as an ATP-dependent pump, pulling dsDNA into and through the RuvAB complex. RuvB forms 2 homohexamers on either side of HJ DNA bound by 1 or 2 RuvA tetramers; 4 subunits per hexamer contact DNA at a time. Coordinated motions by a converter formed by DNA-disengaged RuvB subunits stimulates ATP hydrolysis and nucleotide exchange. Immobilization of the converter enables RuvB to convert the ATP-contained energy into a lever motion, pulling 2 nucleotides of DNA out of the RuvA tetramer per ATP hydrolyzed, thus driving DNA branch migration. The RuvB motors rotate together with the DNA substrate, which together with the progressing nucleotide cycle form the mechanistic basis for DNA recombination by continuous HJ branch migration. Branch migration allows RuvC to scan DNA until it finds its consensus sequence, where it cleaves and resolves cruciform DNA.</text>
</comment>
<comment type="catalytic activity">
    <reaction evidence="1">
        <text>ATP + H2O = ADP + phosphate + H(+)</text>
        <dbReference type="Rhea" id="RHEA:13065"/>
        <dbReference type="ChEBI" id="CHEBI:15377"/>
        <dbReference type="ChEBI" id="CHEBI:15378"/>
        <dbReference type="ChEBI" id="CHEBI:30616"/>
        <dbReference type="ChEBI" id="CHEBI:43474"/>
        <dbReference type="ChEBI" id="CHEBI:456216"/>
    </reaction>
</comment>
<comment type="subunit">
    <text evidence="1">Homohexamer. Forms an RuvA(8)-RuvB(12)-Holliday junction (HJ) complex. HJ DNA is sandwiched between 2 RuvA tetramers; dsDNA enters through RuvA and exits via RuvB. An RuvB hexamer assembles on each DNA strand where it exits the tetramer. Each RuvB hexamer is contacted by two RuvA subunits (via domain III) on 2 adjacent RuvB subunits; this complex drives branch migration. In the full resolvosome a probable DNA-RuvA(4)-RuvB(12)-RuvC(2) complex forms which resolves the HJ.</text>
</comment>
<comment type="subcellular location">
    <subcellularLocation>
        <location evidence="1">Cytoplasm</location>
    </subcellularLocation>
</comment>
<comment type="domain">
    <text evidence="1">Has 3 domains, the large (RuvB-L) and small ATPase (RuvB-S) domains and the C-terminal head (RuvB-H) domain. The head domain binds DNA, while the ATPase domains jointly bind ATP, ADP or are empty depending on the state of the subunit in the translocation cycle. During a single DNA translocation step the structure of each domain remains the same, but their relative positions change.</text>
</comment>
<comment type="similarity">
    <text evidence="1">Belongs to the RuvB family.</text>
</comment>
<comment type="sequence caution" evidence="2">
    <conflict type="erroneous initiation">
        <sequence resource="EMBL-CDS" id="ABE74468"/>
    </conflict>
</comment>
<evidence type="ECO:0000255" key="1">
    <source>
        <dbReference type="HAMAP-Rule" id="MF_00016"/>
    </source>
</evidence>
<evidence type="ECO:0000305" key="2"/>
<protein>
    <recommendedName>
        <fullName evidence="1">Holliday junction branch migration complex subunit RuvB</fullName>
        <ecNumber evidence="1">3.6.4.-</ecNumber>
    </recommendedName>
</protein>
<gene>
    <name evidence="1" type="primary">ruvB</name>
    <name type="ordered locus">Pcryo_0685</name>
</gene>
<keyword id="KW-0067">ATP-binding</keyword>
<keyword id="KW-0963">Cytoplasm</keyword>
<keyword id="KW-0227">DNA damage</keyword>
<keyword id="KW-0233">DNA recombination</keyword>
<keyword id="KW-0234">DNA repair</keyword>
<keyword id="KW-0238">DNA-binding</keyword>
<keyword id="KW-0378">Hydrolase</keyword>
<keyword id="KW-0547">Nucleotide-binding</keyword>
<name>RUVB_PSYCK</name>
<organism>
    <name type="scientific">Psychrobacter cryohalolentis (strain ATCC BAA-1226 / DSM 17306 / VKM B-2378 / K5)</name>
    <dbReference type="NCBI Taxonomy" id="335284"/>
    <lineage>
        <taxon>Bacteria</taxon>
        <taxon>Pseudomonadati</taxon>
        <taxon>Pseudomonadota</taxon>
        <taxon>Gammaproteobacteria</taxon>
        <taxon>Moraxellales</taxon>
        <taxon>Moraxellaceae</taxon>
        <taxon>Psychrobacter</taxon>
    </lineage>
</organism>
<dbReference type="EC" id="3.6.4.-" evidence="1"/>
<dbReference type="EMBL" id="CP000323">
    <property type="protein sequence ID" value="ABE74468.1"/>
    <property type="status" value="ALT_INIT"/>
    <property type="molecule type" value="Genomic_DNA"/>
</dbReference>
<dbReference type="SMR" id="Q1QCY5"/>
<dbReference type="STRING" id="335284.Pcryo_0685"/>
<dbReference type="KEGG" id="pcr:Pcryo_0685"/>
<dbReference type="eggNOG" id="COG2255">
    <property type="taxonomic scope" value="Bacteria"/>
</dbReference>
<dbReference type="HOGENOM" id="CLU_055599_1_0_6"/>
<dbReference type="Proteomes" id="UP000002425">
    <property type="component" value="Chromosome"/>
</dbReference>
<dbReference type="GO" id="GO:0005737">
    <property type="term" value="C:cytoplasm"/>
    <property type="evidence" value="ECO:0007669"/>
    <property type="project" value="UniProtKB-SubCell"/>
</dbReference>
<dbReference type="GO" id="GO:0048476">
    <property type="term" value="C:Holliday junction resolvase complex"/>
    <property type="evidence" value="ECO:0007669"/>
    <property type="project" value="UniProtKB-UniRule"/>
</dbReference>
<dbReference type="GO" id="GO:0005524">
    <property type="term" value="F:ATP binding"/>
    <property type="evidence" value="ECO:0007669"/>
    <property type="project" value="UniProtKB-UniRule"/>
</dbReference>
<dbReference type="GO" id="GO:0016887">
    <property type="term" value="F:ATP hydrolysis activity"/>
    <property type="evidence" value="ECO:0007669"/>
    <property type="project" value="InterPro"/>
</dbReference>
<dbReference type="GO" id="GO:0000400">
    <property type="term" value="F:four-way junction DNA binding"/>
    <property type="evidence" value="ECO:0007669"/>
    <property type="project" value="UniProtKB-UniRule"/>
</dbReference>
<dbReference type="GO" id="GO:0009378">
    <property type="term" value="F:four-way junction helicase activity"/>
    <property type="evidence" value="ECO:0007669"/>
    <property type="project" value="InterPro"/>
</dbReference>
<dbReference type="GO" id="GO:0006310">
    <property type="term" value="P:DNA recombination"/>
    <property type="evidence" value="ECO:0007669"/>
    <property type="project" value="UniProtKB-UniRule"/>
</dbReference>
<dbReference type="GO" id="GO:0006281">
    <property type="term" value="P:DNA repair"/>
    <property type="evidence" value="ECO:0007669"/>
    <property type="project" value="UniProtKB-UniRule"/>
</dbReference>
<dbReference type="CDD" id="cd00009">
    <property type="entry name" value="AAA"/>
    <property type="match status" value="1"/>
</dbReference>
<dbReference type="FunFam" id="1.10.8.60:FF:000023">
    <property type="entry name" value="Holliday junction ATP-dependent DNA helicase RuvB"/>
    <property type="match status" value="1"/>
</dbReference>
<dbReference type="FunFam" id="3.40.50.300:FF:000073">
    <property type="entry name" value="Holliday junction ATP-dependent DNA helicase RuvB"/>
    <property type="match status" value="1"/>
</dbReference>
<dbReference type="Gene3D" id="1.10.8.60">
    <property type="match status" value="1"/>
</dbReference>
<dbReference type="Gene3D" id="3.40.50.300">
    <property type="entry name" value="P-loop containing nucleotide triphosphate hydrolases"/>
    <property type="match status" value="1"/>
</dbReference>
<dbReference type="Gene3D" id="1.10.10.10">
    <property type="entry name" value="Winged helix-like DNA-binding domain superfamily/Winged helix DNA-binding domain"/>
    <property type="match status" value="1"/>
</dbReference>
<dbReference type="HAMAP" id="MF_00016">
    <property type="entry name" value="DNA_HJ_migration_RuvB"/>
    <property type="match status" value="1"/>
</dbReference>
<dbReference type="InterPro" id="IPR003593">
    <property type="entry name" value="AAA+_ATPase"/>
</dbReference>
<dbReference type="InterPro" id="IPR041445">
    <property type="entry name" value="AAA_lid_4"/>
</dbReference>
<dbReference type="InterPro" id="IPR004605">
    <property type="entry name" value="DNA_helicase_Holl-junc_RuvB"/>
</dbReference>
<dbReference type="InterPro" id="IPR027417">
    <property type="entry name" value="P-loop_NTPase"/>
</dbReference>
<dbReference type="InterPro" id="IPR008824">
    <property type="entry name" value="RuvB-like_N"/>
</dbReference>
<dbReference type="InterPro" id="IPR008823">
    <property type="entry name" value="RuvB_C"/>
</dbReference>
<dbReference type="InterPro" id="IPR036388">
    <property type="entry name" value="WH-like_DNA-bd_sf"/>
</dbReference>
<dbReference type="InterPro" id="IPR036390">
    <property type="entry name" value="WH_DNA-bd_sf"/>
</dbReference>
<dbReference type="NCBIfam" id="NF000868">
    <property type="entry name" value="PRK00080.1"/>
    <property type="match status" value="1"/>
</dbReference>
<dbReference type="NCBIfam" id="TIGR00635">
    <property type="entry name" value="ruvB"/>
    <property type="match status" value="1"/>
</dbReference>
<dbReference type="PANTHER" id="PTHR42848">
    <property type="match status" value="1"/>
</dbReference>
<dbReference type="PANTHER" id="PTHR42848:SF1">
    <property type="entry name" value="HOLLIDAY JUNCTION BRANCH MIGRATION COMPLEX SUBUNIT RUVB"/>
    <property type="match status" value="1"/>
</dbReference>
<dbReference type="Pfam" id="PF17864">
    <property type="entry name" value="AAA_lid_4"/>
    <property type="match status" value="1"/>
</dbReference>
<dbReference type="Pfam" id="PF05491">
    <property type="entry name" value="RuvB_C"/>
    <property type="match status" value="1"/>
</dbReference>
<dbReference type="Pfam" id="PF05496">
    <property type="entry name" value="RuvB_N"/>
    <property type="match status" value="1"/>
</dbReference>
<dbReference type="SMART" id="SM00382">
    <property type="entry name" value="AAA"/>
    <property type="match status" value="1"/>
</dbReference>
<dbReference type="SUPFAM" id="SSF52540">
    <property type="entry name" value="P-loop containing nucleoside triphosphate hydrolases"/>
    <property type="match status" value="1"/>
</dbReference>
<dbReference type="SUPFAM" id="SSF46785">
    <property type="entry name" value="Winged helix' DNA-binding domain"/>
    <property type="match status" value="1"/>
</dbReference>
<proteinExistence type="inferred from homology"/>
<sequence length="331" mass="36274">MAKTMMQDRLINPLEGAADAPDANIRPALLAEYIGQPVVREQMEVFIQAARARDEALDHTLIFGPPGLGKTTLANIIAREMGGNLRSTSGPVLERAGDLAAMLTNLEAGDVLFIDEIHRLSPVIEEILYPAMEDFQLDIMIGEGPAARSIKLDLPPFTLVAATTRAGLLTSPLRDRFGIVQRLEFYNIADLTTIVSRAARLMRVPMSEDGAVEIARRARGTPRIANRLLRRVRDYAQVRGDGSINGAIAGSALDMLAVDRRGLDHLDRRYIEILHERFDGGPAGVEAVAAAMAEDRGTLEDVIEPYLIQQGYVLRTARGRVLTQMAIDQML</sequence>
<accession>Q1QCY5</accession>